<protein>
    <recommendedName>
        <fullName evidence="1">Cyclic pyranopterin monophosphate synthase</fullName>
        <ecNumber evidence="1">4.6.1.17</ecNumber>
    </recommendedName>
    <alternativeName>
        <fullName evidence="1">Molybdenum cofactor biosynthesis protein C</fullName>
    </alternativeName>
</protein>
<organism>
    <name type="scientific">Vibrio campbellii (strain ATCC BAA-1116)</name>
    <dbReference type="NCBI Taxonomy" id="2902295"/>
    <lineage>
        <taxon>Bacteria</taxon>
        <taxon>Pseudomonadati</taxon>
        <taxon>Pseudomonadota</taxon>
        <taxon>Gammaproteobacteria</taxon>
        <taxon>Vibrionales</taxon>
        <taxon>Vibrionaceae</taxon>
        <taxon>Vibrio</taxon>
    </lineage>
</organism>
<reference key="1">
    <citation type="submission" date="2007-08" db="EMBL/GenBank/DDBJ databases">
        <authorList>
            <consortium name="The Vibrio harveyi Genome Sequencing Project"/>
            <person name="Bassler B."/>
            <person name="Clifton S.W."/>
            <person name="Fulton L."/>
            <person name="Delehaunty K."/>
            <person name="Fronick C."/>
            <person name="Harrison M."/>
            <person name="Markivic C."/>
            <person name="Fulton R."/>
            <person name="Tin-Wollam A.-M."/>
            <person name="Shah N."/>
            <person name="Pepin K."/>
            <person name="Nash W."/>
            <person name="Thiruvilangam P."/>
            <person name="Bhonagiri V."/>
            <person name="Waters C."/>
            <person name="Tu K.C."/>
            <person name="Irgon J."/>
            <person name="Wilson R.K."/>
        </authorList>
    </citation>
    <scope>NUCLEOTIDE SEQUENCE [LARGE SCALE GENOMIC DNA]</scope>
    <source>
        <strain>ATCC BAA-1116 / BB120</strain>
    </source>
</reference>
<sequence length="158" mass="17039">MTQFTHINASGEANMVDVSAKAETVREARAEAFVHMAPETLQLIVSGQHHKGDVFATARIAGIQAAKKTWDLIPLCHPLLLSKVEVQLEAIEAENKVRIESVCKLAGKTGVEMEALTAASVAALTIYDMCKAVQKDMVIGQVRLLEKTGGKSGHFKAE</sequence>
<gene>
    <name evidence="1" type="primary">moaC</name>
    <name type="ordered locus">VIBHAR_02952</name>
</gene>
<keyword id="KW-0456">Lyase</keyword>
<keyword id="KW-0501">Molybdenum cofactor biosynthesis</keyword>
<dbReference type="EC" id="4.6.1.17" evidence="1"/>
<dbReference type="EMBL" id="CP000789">
    <property type="protein sequence ID" value="ABU71905.1"/>
    <property type="molecule type" value="Genomic_DNA"/>
</dbReference>
<dbReference type="RefSeq" id="WP_005433216.1">
    <property type="nucleotide sequence ID" value="NC_022269.1"/>
</dbReference>
<dbReference type="SMR" id="A7MVD3"/>
<dbReference type="GeneID" id="67376738"/>
<dbReference type="KEGG" id="vha:VIBHAR_02952"/>
<dbReference type="PATRIC" id="fig|338187.25.peg.3235"/>
<dbReference type="UniPathway" id="UPA00344"/>
<dbReference type="Proteomes" id="UP000008152">
    <property type="component" value="Chromosome I"/>
</dbReference>
<dbReference type="GO" id="GO:0061799">
    <property type="term" value="F:cyclic pyranopterin monophosphate synthase activity"/>
    <property type="evidence" value="ECO:0007669"/>
    <property type="project" value="UniProtKB-UniRule"/>
</dbReference>
<dbReference type="GO" id="GO:0061798">
    <property type="term" value="F:GTP 3',8'-cyclase activity"/>
    <property type="evidence" value="ECO:0007669"/>
    <property type="project" value="TreeGrafter"/>
</dbReference>
<dbReference type="GO" id="GO:0006777">
    <property type="term" value="P:Mo-molybdopterin cofactor biosynthetic process"/>
    <property type="evidence" value="ECO:0007669"/>
    <property type="project" value="UniProtKB-UniRule"/>
</dbReference>
<dbReference type="CDD" id="cd01420">
    <property type="entry name" value="MoaC_PE"/>
    <property type="match status" value="1"/>
</dbReference>
<dbReference type="FunFam" id="3.30.70.640:FF:000001">
    <property type="entry name" value="Cyclic pyranopterin monophosphate synthase"/>
    <property type="match status" value="1"/>
</dbReference>
<dbReference type="Gene3D" id="3.30.70.640">
    <property type="entry name" value="Molybdopterin cofactor biosynthesis C (MoaC) domain"/>
    <property type="match status" value="1"/>
</dbReference>
<dbReference type="HAMAP" id="MF_01224_B">
    <property type="entry name" value="MoaC_B"/>
    <property type="match status" value="1"/>
</dbReference>
<dbReference type="InterPro" id="IPR023045">
    <property type="entry name" value="MoaC"/>
</dbReference>
<dbReference type="InterPro" id="IPR047594">
    <property type="entry name" value="MoaC_bact/euk"/>
</dbReference>
<dbReference type="InterPro" id="IPR036522">
    <property type="entry name" value="MoaC_sf"/>
</dbReference>
<dbReference type="InterPro" id="IPR050105">
    <property type="entry name" value="MoCo_biosynth_MoaA/MoaC"/>
</dbReference>
<dbReference type="InterPro" id="IPR002820">
    <property type="entry name" value="Mopterin_CF_biosynth-C_dom"/>
</dbReference>
<dbReference type="NCBIfam" id="TIGR00581">
    <property type="entry name" value="moaC"/>
    <property type="match status" value="1"/>
</dbReference>
<dbReference type="NCBIfam" id="NF006870">
    <property type="entry name" value="PRK09364.1"/>
    <property type="match status" value="1"/>
</dbReference>
<dbReference type="PANTHER" id="PTHR22960:SF0">
    <property type="entry name" value="MOLYBDENUM COFACTOR BIOSYNTHESIS PROTEIN 1"/>
    <property type="match status" value="1"/>
</dbReference>
<dbReference type="PANTHER" id="PTHR22960">
    <property type="entry name" value="MOLYBDOPTERIN COFACTOR SYNTHESIS PROTEIN A"/>
    <property type="match status" value="1"/>
</dbReference>
<dbReference type="Pfam" id="PF01967">
    <property type="entry name" value="MoaC"/>
    <property type="match status" value="1"/>
</dbReference>
<dbReference type="SUPFAM" id="SSF55040">
    <property type="entry name" value="Molybdenum cofactor biosynthesis protein C, MoaC"/>
    <property type="match status" value="1"/>
</dbReference>
<name>MOAC_VIBC1</name>
<feature type="chain" id="PRO_1000054160" description="Cyclic pyranopterin monophosphate synthase">
    <location>
        <begin position="1"/>
        <end position="158"/>
    </location>
</feature>
<feature type="active site" evidence="1">
    <location>
        <position position="128"/>
    </location>
</feature>
<feature type="binding site" evidence="1">
    <location>
        <begin position="75"/>
        <end position="77"/>
    </location>
    <ligand>
        <name>substrate</name>
    </ligand>
</feature>
<feature type="binding site" evidence="1">
    <location>
        <begin position="113"/>
        <end position="114"/>
    </location>
    <ligand>
        <name>substrate</name>
    </ligand>
</feature>
<evidence type="ECO:0000255" key="1">
    <source>
        <dbReference type="HAMAP-Rule" id="MF_01224"/>
    </source>
</evidence>
<accession>A7MVD3</accession>
<proteinExistence type="inferred from homology"/>
<comment type="function">
    <text evidence="1">Catalyzes the conversion of (8S)-3',8-cyclo-7,8-dihydroguanosine 5'-triphosphate to cyclic pyranopterin monophosphate (cPMP).</text>
</comment>
<comment type="catalytic activity">
    <reaction evidence="1">
        <text>(8S)-3',8-cyclo-7,8-dihydroguanosine 5'-triphosphate = cyclic pyranopterin phosphate + diphosphate</text>
        <dbReference type="Rhea" id="RHEA:49580"/>
        <dbReference type="ChEBI" id="CHEBI:33019"/>
        <dbReference type="ChEBI" id="CHEBI:59648"/>
        <dbReference type="ChEBI" id="CHEBI:131766"/>
        <dbReference type="EC" id="4.6.1.17"/>
    </reaction>
</comment>
<comment type="pathway">
    <text evidence="1">Cofactor biosynthesis; molybdopterin biosynthesis.</text>
</comment>
<comment type="subunit">
    <text evidence="1">Homohexamer; trimer of dimers.</text>
</comment>
<comment type="similarity">
    <text evidence="1">Belongs to the MoaC family.</text>
</comment>